<accession>P21340</accession>
<accession>O32112</accession>
<sequence>MSVKMKKCSREDLQTLQQLSIETFNDTFKEQNSPENMKAYLESAFNTEQLEKELSNMSSQFFFIYFDHEIAGYVKVNIDDAQSEEMGAESLEIERIYIKNSFQKHGLGKHLLNKAIEIALERNKKNIWLGVWEKNENAIAFYKKMGFVQTGAHSFYMGDEEQTDLIMAKTLI</sequence>
<dbReference type="EC" id="2.3.1.57" evidence="3"/>
<dbReference type="EMBL" id="M36471">
    <property type="protein sequence ID" value="AAA22638.1"/>
    <property type="molecule type" value="Genomic_DNA"/>
</dbReference>
<dbReference type="EMBL" id="AL009126">
    <property type="protein sequence ID" value="CAB15205.1"/>
    <property type="molecule type" value="Genomic_DNA"/>
</dbReference>
<dbReference type="PIR" id="A35145">
    <property type="entry name" value="A35145"/>
</dbReference>
<dbReference type="RefSeq" id="NP_391095.1">
    <property type="nucleotide sequence ID" value="NC_000964.3"/>
</dbReference>
<dbReference type="RefSeq" id="WP_003244000.1">
    <property type="nucleotide sequence ID" value="NZ_OZ025638.1"/>
</dbReference>
<dbReference type="PDB" id="1TIQ">
    <property type="method" value="X-ray"/>
    <property type="resolution" value="1.90 A"/>
    <property type="chains" value="A/B=1-172"/>
</dbReference>
<dbReference type="PDBsum" id="1TIQ"/>
<dbReference type="SMR" id="P21340"/>
<dbReference type="FunCoup" id="P21340">
    <property type="interactions" value="165"/>
</dbReference>
<dbReference type="STRING" id="224308.BSU32150"/>
<dbReference type="DrugBank" id="DB04447">
    <property type="generic name" value="1,4-Dithiothreitol"/>
</dbReference>
<dbReference type="DrugBank" id="DB01992">
    <property type="generic name" value="Coenzyme A"/>
</dbReference>
<dbReference type="PaxDb" id="224308-BSU32150"/>
<dbReference type="EnsemblBacteria" id="CAB15205">
    <property type="protein sequence ID" value="CAB15205"/>
    <property type="gene ID" value="BSU_32150"/>
</dbReference>
<dbReference type="GeneID" id="937204"/>
<dbReference type="KEGG" id="bsu:BSU32150"/>
<dbReference type="PATRIC" id="fig|224308.179.peg.3481"/>
<dbReference type="eggNOG" id="COG0456">
    <property type="taxonomic scope" value="Bacteria"/>
</dbReference>
<dbReference type="InParanoid" id="P21340"/>
<dbReference type="OrthoDB" id="7205533at2"/>
<dbReference type="PhylomeDB" id="P21340"/>
<dbReference type="BioCyc" id="BSUB:BSU32150-MONOMER"/>
<dbReference type="EvolutionaryTrace" id="P21340"/>
<dbReference type="Proteomes" id="UP000001570">
    <property type="component" value="Chromosome"/>
</dbReference>
<dbReference type="GO" id="GO:0004145">
    <property type="term" value="F:diamine N-acetyltransferase activity"/>
    <property type="evidence" value="ECO:0000314"/>
    <property type="project" value="UniProtKB"/>
</dbReference>
<dbReference type="GO" id="GO:0043939">
    <property type="term" value="P:negative regulation of sporulation"/>
    <property type="evidence" value="ECO:0000315"/>
    <property type="project" value="UniProtKB"/>
</dbReference>
<dbReference type="GO" id="GO:0030435">
    <property type="term" value="P:sporulation resulting in formation of a cellular spore"/>
    <property type="evidence" value="ECO:0007669"/>
    <property type="project" value="UniProtKB-KW"/>
</dbReference>
<dbReference type="CDD" id="cd04301">
    <property type="entry name" value="NAT_SF"/>
    <property type="match status" value="1"/>
</dbReference>
<dbReference type="Gene3D" id="3.40.630.30">
    <property type="match status" value="1"/>
</dbReference>
<dbReference type="InterPro" id="IPR016181">
    <property type="entry name" value="Acyl_CoA_acyltransferase"/>
</dbReference>
<dbReference type="InterPro" id="IPR000182">
    <property type="entry name" value="GNAT_dom"/>
</dbReference>
<dbReference type="InterPro" id="IPR051556">
    <property type="entry name" value="N-term/lysine_N-AcTrnsfr"/>
</dbReference>
<dbReference type="PANTHER" id="PTHR42919">
    <property type="entry name" value="N-ALPHA-ACETYLTRANSFERASE"/>
    <property type="match status" value="1"/>
</dbReference>
<dbReference type="PANTHER" id="PTHR42919:SF8">
    <property type="entry name" value="N-ALPHA-ACETYLTRANSFERASE 50"/>
    <property type="match status" value="1"/>
</dbReference>
<dbReference type="Pfam" id="PF00583">
    <property type="entry name" value="Acetyltransf_1"/>
    <property type="match status" value="1"/>
</dbReference>
<dbReference type="SUPFAM" id="SSF55729">
    <property type="entry name" value="Acyl-CoA N-acyltransferases (Nat)"/>
    <property type="match status" value="1"/>
</dbReference>
<dbReference type="PROSITE" id="PS51186">
    <property type="entry name" value="GNAT"/>
    <property type="match status" value="1"/>
</dbReference>
<comment type="function">
    <text evidence="3 4">Involved in the protection against polyamine toxicity by regulating their concentration. Could also be involved in the negative control of sporulation as well as production of degradative enzymes such as alpha-amylase, levansucrase and alkaline phosphatase. Catalyzes the transfer of an acetyl group from acetyl coenzyme A (AcCoA) to an acceptor substrate and releases both CoA and the acetylated product. It possesses N1-acetyltransferase activity toward polyamine substrates including spermidine, spermine, aminopropylcadaverine, norspermidine, homospermidine, N(8)-acetylspermidine, diaminopropane and agmatine.</text>
</comment>
<comment type="catalytic activity">
    <reaction evidence="3">
        <text>an alkane-alpha,omega-diamine + acetyl-CoA = an N-acetylalkane-alpha,omega-diamine + CoA + H(+)</text>
        <dbReference type="Rhea" id="RHEA:11116"/>
        <dbReference type="Rhea" id="RHEA-COMP:9766"/>
        <dbReference type="Rhea" id="RHEA-COMP:9767"/>
        <dbReference type="ChEBI" id="CHEBI:15378"/>
        <dbReference type="ChEBI" id="CHEBI:57287"/>
        <dbReference type="ChEBI" id="CHEBI:57288"/>
        <dbReference type="ChEBI" id="CHEBI:70977"/>
        <dbReference type="ChEBI" id="CHEBI:70988"/>
        <dbReference type="EC" id="2.3.1.57"/>
    </reaction>
</comment>
<comment type="biophysicochemical properties">
    <kinetics>
        <KM evidence="3">31 uM for AcCoA (at pH 9 and 37 degrees Celsius)</KM>
        <KM evidence="3">76 uM for spermine (at pH 9 and 37 degrees Celsius)</KM>
        <KM evidence="3">295 uM for N(1)-acetylspermine (at pH 9 and 37 degrees Celsius)</KM>
        <KM evidence="3">323 uM for spermidine (at pH 9 and 37 degrees Celsius)</KM>
        <KM evidence="3">410 uM for aminopropylcadaverine (at pH 9 and 37 degrees Celsius)</KM>
        <Vmax evidence="3">550.0 nmol/min/mg enzyme with AcCoA as substrate (at pH 9 and 37 degrees Celsius)</Vmax>
        <Vmax evidence="3">481.0 nmol/min/mg enzyme with spermine as substrate (at pH 9 and 37 degrees Celsius)</Vmax>
        <Vmax evidence="3">178.0 nmol/min/mg enzyme with N(1)-acetylspermine as substrate (at pH 9 and 37 degrees Celsius)</Vmax>
        <Vmax evidence="3">154.0 nmol/min/mg enzyme with aminopropylcadaverine as substrate (at pH 9 and 37 degrees Celsius)</Vmax>
        <Vmax evidence="3">130.0 nmol/min/mg enzyme with spermidine as substrate (at pH 9 and 37 degrees Celsius)</Vmax>
        <text evidence="3">kcat is 21.9 min(-1) for acetyltransferase activity with AcCoA as substrate (at pH 9 and 37 degrees Celsius). kcat is 19.1 min(-1) for acetyltransferase activity with spermine as substrate (at pH 9 and 37 degrees Celsius). kcat is 7.1 min(-1) for acetyltransferase activity with N(1)-acetylspermine as substrate (at pH 9 and 37 degrees Celsius). kcat is 6.1 min(-1) for acetyltransferase activity with aminopropylcadaverine as substrate (at pH 9 and 37 degrees Celsius). kcat is 5.2 min(-1) for acetyltransferase activity with spermidine as substrate (at pH 9 and 37 degrees Celsius).</text>
    </kinetics>
</comment>
<comment type="subunit">
    <text evidence="3 4">Monomer.</text>
</comment>
<comment type="disruption phenotype">
    <text evidence="4">Cells lacking this gene display release of repression of protease synthesis and sporulation in glucose-enriched medium.</text>
</comment>
<comment type="similarity">
    <text evidence="7">Belongs to the acetyltransferase family.</text>
</comment>
<proteinExistence type="evidence at protein level"/>
<protein>
    <recommendedName>
        <fullName evidence="5">Spermidine/spermine N(1)-acetyltransferase</fullName>
        <shortName evidence="5">SSAT</shortName>
    </recommendedName>
    <alternativeName>
        <fullName evidence="5">Protease synthase and sporulation negative regulatory protein PAI 1</fullName>
    </alternativeName>
    <alternativeName>
        <fullName evidence="5">Spermidine N(1)-acetyltransferase</fullName>
        <shortName evidence="5">SAT</shortName>
        <ecNumber evidence="3">2.3.1.57</ecNumber>
    </alternativeName>
</protein>
<organism>
    <name type="scientific">Bacillus subtilis (strain 168)</name>
    <dbReference type="NCBI Taxonomy" id="224308"/>
    <lineage>
        <taxon>Bacteria</taxon>
        <taxon>Bacillati</taxon>
        <taxon>Bacillota</taxon>
        <taxon>Bacilli</taxon>
        <taxon>Bacillales</taxon>
        <taxon>Bacillaceae</taxon>
        <taxon>Bacillus</taxon>
    </lineage>
</organism>
<feature type="initiator methionine" description="Removed" evidence="4">
    <location>
        <position position="1"/>
    </location>
</feature>
<feature type="chain" id="PRO_0000058175" description="Spermidine/spermine N(1)-acetyltransferase">
    <location>
        <begin position="2"/>
        <end position="172"/>
    </location>
</feature>
<feature type="domain" description="N-acetyltransferase" evidence="2">
    <location>
        <begin position="3"/>
        <end position="172"/>
    </location>
</feature>
<feature type="active site" description="Proton donor" evidence="1">
    <location>
        <position position="142"/>
    </location>
</feature>
<feature type="binding site" evidence="3">
    <location>
        <begin position="96"/>
        <end position="98"/>
    </location>
    <ligand>
        <name>acetyl-CoA</name>
        <dbReference type="ChEBI" id="CHEBI:57288"/>
    </ligand>
</feature>
<feature type="binding site" evidence="3">
    <location>
        <begin position="105"/>
        <end position="109"/>
    </location>
    <ligand>
        <name>acetyl-CoA</name>
        <dbReference type="ChEBI" id="CHEBI:57288"/>
    </ligand>
</feature>
<feature type="binding site" evidence="3">
    <location>
        <begin position="135"/>
        <end position="137"/>
    </location>
    <ligand>
        <name>acetyl-CoA</name>
        <dbReference type="ChEBI" id="CHEBI:57288"/>
    </ligand>
</feature>
<feature type="binding site" evidence="3">
    <location>
        <position position="144"/>
    </location>
    <ligand>
        <name>acetyl-CoA</name>
        <dbReference type="ChEBI" id="CHEBI:57288"/>
    </ligand>
</feature>
<feature type="site" description="May have an important role in the acetylation of the polyamine" evidence="8">
    <location>
        <position position="142"/>
    </location>
</feature>
<feature type="sequence conflict" description="In Ref. 1; AAA22638." evidence="7" ref="1">
    <original>T</original>
    <variation>I</variation>
    <location>
        <position position="27"/>
    </location>
</feature>
<feature type="strand" evidence="10">
    <location>
        <begin position="3"/>
        <end position="7"/>
    </location>
</feature>
<feature type="helix" evidence="10">
    <location>
        <begin position="10"/>
        <end position="12"/>
    </location>
</feature>
<feature type="helix" evidence="10">
    <location>
        <begin position="13"/>
        <end position="28"/>
    </location>
</feature>
<feature type="helix" evidence="10">
    <location>
        <begin position="34"/>
        <end position="44"/>
    </location>
</feature>
<feature type="helix" evidence="10">
    <location>
        <begin position="47"/>
        <end position="55"/>
    </location>
</feature>
<feature type="strand" evidence="10">
    <location>
        <begin position="59"/>
        <end position="66"/>
    </location>
</feature>
<feature type="strand" evidence="10">
    <location>
        <begin position="69"/>
        <end position="78"/>
    </location>
</feature>
<feature type="helix" evidence="10">
    <location>
        <begin position="79"/>
        <end position="81"/>
    </location>
</feature>
<feature type="strand" evidence="10">
    <location>
        <begin position="82"/>
        <end position="84"/>
    </location>
</feature>
<feature type="strand" evidence="10">
    <location>
        <begin position="90"/>
        <end position="98"/>
    </location>
</feature>
<feature type="helix" evidence="10">
    <location>
        <begin position="100"/>
        <end position="102"/>
    </location>
</feature>
<feature type="strand" evidence="10">
    <location>
        <begin position="104"/>
        <end position="106"/>
    </location>
</feature>
<feature type="helix" evidence="10">
    <location>
        <begin position="107"/>
        <end position="121"/>
    </location>
</feature>
<feature type="strand" evidence="10">
    <location>
        <begin position="125"/>
        <end position="132"/>
    </location>
</feature>
<feature type="helix" evidence="10">
    <location>
        <begin position="136"/>
        <end position="144"/>
    </location>
</feature>
<feature type="strand" evidence="10">
    <location>
        <begin position="148"/>
        <end position="157"/>
    </location>
</feature>
<feature type="strand" evidence="10">
    <location>
        <begin position="160"/>
        <end position="170"/>
    </location>
</feature>
<name>PAIA_BACSU</name>
<evidence type="ECO:0000250" key="1">
    <source>
        <dbReference type="UniProtKB" id="P0A951"/>
    </source>
</evidence>
<evidence type="ECO:0000255" key="2">
    <source>
        <dbReference type="PROSITE-ProRule" id="PRU00532"/>
    </source>
</evidence>
<evidence type="ECO:0000269" key="3">
    <source>
    </source>
</evidence>
<evidence type="ECO:0000269" key="4">
    <source>
    </source>
</evidence>
<evidence type="ECO:0000303" key="5">
    <source>
    </source>
</evidence>
<evidence type="ECO:0000303" key="6">
    <source>
    </source>
</evidence>
<evidence type="ECO:0000305" key="7"/>
<evidence type="ECO:0000305" key="8">
    <source>
    </source>
</evidence>
<evidence type="ECO:0007744" key="9">
    <source>
        <dbReference type="PDB" id="1TIQ"/>
    </source>
</evidence>
<evidence type="ECO:0007829" key="10">
    <source>
        <dbReference type="PDB" id="1TIQ"/>
    </source>
</evidence>
<keyword id="KW-0002">3D-structure</keyword>
<keyword id="KW-0012">Acyltransferase</keyword>
<keyword id="KW-0903">Direct protein sequencing</keyword>
<keyword id="KW-1185">Reference proteome</keyword>
<keyword id="KW-0749">Sporulation</keyword>
<keyword id="KW-0808">Transferase</keyword>
<reference key="1">
    <citation type="journal article" date="1990" name="J. Bacteriol.">
        <title>A novel Bacillus subtilis gene involved in negative control of sporulation and degradative-enzyme production.</title>
        <authorList>
            <person name="Honjo M."/>
            <person name="Nakayama A."/>
            <person name="Fukazawa K."/>
            <person name="Kawamura K."/>
            <person name="Ando K."/>
            <person name="Hori M."/>
            <person name="Furutani Y."/>
        </authorList>
    </citation>
    <scope>NUCLEOTIDE SEQUENCE [GENOMIC DNA]</scope>
    <scope>PROTEIN SEQUENCE OF 2-16</scope>
    <scope>FUNCTION</scope>
    <scope>DISRUPTION PHENOTYPE</scope>
    <scope>SUBUNIT</scope>
    <source>
        <strain>168 / DB104</strain>
    </source>
</reference>
<reference key="2">
    <citation type="journal article" date="1997" name="Nature">
        <title>The complete genome sequence of the Gram-positive bacterium Bacillus subtilis.</title>
        <authorList>
            <person name="Kunst F."/>
            <person name="Ogasawara N."/>
            <person name="Moszer I."/>
            <person name="Albertini A.M."/>
            <person name="Alloni G."/>
            <person name="Azevedo V."/>
            <person name="Bertero M.G."/>
            <person name="Bessieres P."/>
            <person name="Bolotin A."/>
            <person name="Borchert S."/>
            <person name="Borriss R."/>
            <person name="Boursier L."/>
            <person name="Brans A."/>
            <person name="Braun M."/>
            <person name="Brignell S.C."/>
            <person name="Bron S."/>
            <person name="Brouillet S."/>
            <person name="Bruschi C.V."/>
            <person name="Caldwell B."/>
            <person name="Capuano V."/>
            <person name="Carter N.M."/>
            <person name="Choi S.-K."/>
            <person name="Codani J.-J."/>
            <person name="Connerton I.F."/>
            <person name="Cummings N.J."/>
            <person name="Daniel R.A."/>
            <person name="Denizot F."/>
            <person name="Devine K.M."/>
            <person name="Duesterhoeft A."/>
            <person name="Ehrlich S.D."/>
            <person name="Emmerson P.T."/>
            <person name="Entian K.-D."/>
            <person name="Errington J."/>
            <person name="Fabret C."/>
            <person name="Ferrari E."/>
            <person name="Foulger D."/>
            <person name="Fritz C."/>
            <person name="Fujita M."/>
            <person name="Fujita Y."/>
            <person name="Fuma S."/>
            <person name="Galizzi A."/>
            <person name="Galleron N."/>
            <person name="Ghim S.-Y."/>
            <person name="Glaser P."/>
            <person name="Goffeau A."/>
            <person name="Golightly E.J."/>
            <person name="Grandi G."/>
            <person name="Guiseppi G."/>
            <person name="Guy B.J."/>
            <person name="Haga K."/>
            <person name="Haiech J."/>
            <person name="Harwood C.R."/>
            <person name="Henaut A."/>
            <person name="Hilbert H."/>
            <person name="Holsappel S."/>
            <person name="Hosono S."/>
            <person name="Hullo M.-F."/>
            <person name="Itaya M."/>
            <person name="Jones L.-M."/>
            <person name="Joris B."/>
            <person name="Karamata D."/>
            <person name="Kasahara Y."/>
            <person name="Klaerr-Blanchard M."/>
            <person name="Klein C."/>
            <person name="Kobayashi Y."/>
            <person name="Koetter P."/>
            <person name="Koningstein G."/>
            <person name="Krogh S."/>
            <person name="Kumano M."/>
            <person name="Kurita K."/>
            <person name="Lapidus A."/>
            <person name="Lardinois S."/>
            <person name="Lauber J."/>
            <person name="Lazarevic V."/>
            <person name="Lee S.-M."/>
            <person name="Levine A."/>
            <person name="Liu H."/>
            <person name="Masuda S."/>
            <person name="Mauel C."/>
            <person name="Medigue C."/>
            <person name="Medina N."/>
            <person name="Mellado R.P."/>
            <person name="Mizuno M."/>
            <person name="Moestl D."/>
            <person name="Nakai S."/>
            <person name="Noback M."/>
            <person name="Noone D."/>
            <person name="O'Reilly M."/>
            <person name="Ogawa K."/>
            <person name="Ogiwara A."/>
            <person name="Oudega B."/>
            <person name="Park S.-H."/>
            <person name="Parro V."/>
            <person name="Pohl T.M."/>
            <person name="Portetelle D."/>
            <person name="Porwollik S."/>
            <person name="Prescott A.M."/>
            <person name="Presecan E."/>
            <person name="Pujic P."/>
            <person name="Purnelle B."/>
            <person name="Rapoport G."/>
            <person name="Rey M."/>
            <person name="Reynolds S."/>
            <person name="Rieger M."/>
            <person name="Rivolta C."/>
            <person name="Rocha E."/>
            <person name="Roche B."/>
            <person name="Rose M."/>
            <person name="Sadaie Y."/>
            <person name="Sato T."/>
            <person name="Scanlan E."/>
            <person name="Schleich S."/>
            <person name="Schroeter R."/>
            <person name="Scoffone F."/>
            <person name="Sekiguchi J."/>
            <person name="Sekowska A."/>
            <person name="Seror S.J."/>
            <person name="Serror P."/>
            <person name="Shin B.-S."/>
            <person name="Soldo B."/>
            <person name="Sorokin A."/>
            <person name="Tacconi E."/>
            <person name="Takagi T."/>
            <person name="Takahashi H."/>
            <person name="Takemaru K."/>
            <person name="Takeuchi M."/>
            <person name="Tamakoshi A."/>
            <person name="Tanaka T."/>
            <person name="Terpstra P."/>
            <person name="Tognoni A."/>
            <person name="Tosato V."/>
            <person name="Uchiyama S."/>
            <person name="Vandenbol M."/>
            <person name="Vannier F."/>
            <person name="Vassarotti A."/>
            <person name="Viari A."/>
            <person name="Wambutt R."/>
            <person name="Wedler E."/>
            <person name="Wedler H."/>
            <person name="Weitzenegger T."/>
            <person name="Winters P."/>
            <person name="Wipat A."/>
            <person name="Yamamoto H."/>
            <person name="Yamane K."/>
            <person name="Yasumoto K."/>
            <person name="Yata K."/>
            <person name="Yoshida K."/>
            <person name="Yoshikawa H.-F."/>
            <person name="Zumstein E."/>
            <person name="Yoshikawa H."/>
            <person name="Danchin A."/>
        </authorList>
    </citation>
    <scope>NUCLEOTIDE SEQUENCE [LARGE SCALE GENOMIC DNA]</scope>
    <source>
        <strain>168</strain>
    </source>
</reference>
<reference evidence="9" key="3">
    <citation type="journal article" date="2005" name="J. Biol. Chem.">
        <title>Structural and functional evidence for Bacillus subtilis PaiA as a novel N1-spermidine/spermine acetyltransferase.</title>
        <authorList>
            <person name="Forouhar F."/>
            <person name="Lee I.-S."/>
            <person name="Vujcic J."/>
            <person name="Vujcic S."/>
            <person name="Shen J."/>
            <person name="Vorobiev S.M."/>
            <person name="Xiao R."/>
            <person name="Acton T.B."/>
            <person name="Montelione G.T."/>
            <person name="Porter C.W."/>
            <person name="Tong L."/>
        </authorList>
    </citation>
    <scope>X-RAY CRYSTALLOGRAPHY (1.9 ANGSTROMS) IN COMPLEX WITH COENZYME A</scope>
    <scope>FUNCTION</scope>
    <scope>CATALYTIC ACTIVITY</scope>
    <scope>BIOPHYSICOCHEMICAL PROPERTIES</scope>
    <scope>SUBSTRATE SPECIFICITY</scope>
    <scope>SUBUNIT</scope>
</reference>
<gene>
    <name evidence="6" type="primary">paiA</name>
    <name type="ordered locus">BSU32150</name>
</gene>